<accession>B8IGT3</accession>
<dbReference type="EC" id="1.1.1.86" evidence="1"/>
<dbReference type="EMBL" id="CP001349">
    <property type="protein sequence ID" value="ACL57808.1"/>
    <property type="molecule type" value="Genomic_DNA"/>
</dbReference>
<dbReference type="SMR" id="B8IGT3"/>
<dbReference type="STRING" id="460265.Mnod_2857"/>
<dbReference type="KEGG" id="mno:Mnod_2857"/>
<dbReference type="eggNOG" id="COG0059">
    <property type="taxonomic scope" value="Bacteria"/>
</dbReference>
<dbReference type="HOGENOM" id="CLU_033821_0_1_5"/>
<dbReference type="OrthoDB" id="9804088at2"/>
<dbReference type="UniPathway" id="UPA00047">
    <property type="reaction ID" value="UER00056"/>
</dbReference>
<dbReference type="UniPathway" id="UPA00049">
    <property type="reaction ID" value="UER00060"/>
</dbReference>
<dbReference type="Proteomes" id="UP000008207">
    <property type="component" value="Chromosome"/>
</dbReference>
<dbReference type="GO" id="GO:0005829">
    <property type="term" value="C:cytosol"/>
    <property type="evidence" value="ECO:0007669"/>
    <property type="project" value="TreeGrafter"/>
</dbReference>
<dbReference type="GO" id="GO:0004455">
    <property type="term" value="F:ketol-acid reductoisomerase activity"/>
    <property type="evidence" value="ECO:0007669"/>
    <property type="project" value="UniProtKB-UniRule"/>
</dbReference>
<dbReference type="GO" id="GO:0000287">
    <property type="term" value="F:magnesium ion binding"/>
    <property type="evidence" value="ECO:0007669"/>
    <property type="project" value="UniProtKB-UniRule"/>
</dbReference>
<dbReference type="GO" id="GO:0050661">
    <property type="term" value="F:NADP binding"/>
    <property type="evidence" value="ECO:0007669"/>
    <property type="project" value="InterPro"/>
</dbReference>
<dbReference type="GO" id="GO:0009097">
    <property type="term" value="P:isoleucine biosynthetic process"/>
    <property type="evidence" value="ECO:0007669"/>
    <property type="project" value="UniProtKB-UniRule"/>
</dbReference>
<dbReference type="GO" id="GO:0009099">
    <property type="term" value="P:L-valine biosynthetic process"/>
    <property type="evidence" value="ECO:0007669"/>
    <property type="project" value="UniProtKB-UniRule"/>
</dbReference>
<dbReference type="FunFam" id="3.40.50.720:FF:000023">
    <property type="entry name" value="Ketol-acid reductoisomerase (NADP(+))"/>
    <property type="match status" value="1"/>
</dbReference>
<dbReference type="Gene3D" id="6.10.240.10">
    <property type="match status" value="1"/>
</dbReference>
<dbReference type="Gene3D" id="3.40.50.720">
    <property type="entry name" value="NAD(P)-binding Rossmann-like Domain"/>
    <property type="match status" value="1"/>
</dbReference>
<dbReference type="HAMAP" id="MF_00435">
    <property type="entry name" value="IlvC"/>
    <property type="match status" value="1"/>
</dbReference>
<dbReference type="InterPro" id="IPR008927">
    <property type="entry name" value="6-PGluconate_DH-like_C_sf"/>
</dbReference>
<dbReference type="InterPro" id="IPR013023">
    <property type="entry name" value="KARI"/>
</dbReference>
<dbReference type="InterPro" id="IPR000506">
    <property type="entry name" value="KARI_C"/>
</dbReference>
<dbReference type="InterPro" id="IPR013116">
    <property type="entry name" value="KARI_N"/>
</dbReference>
<dbReference type="InterPro" id="IPR014359">
    <property type="entry name" value="KARI_prok"/>
</dbReference>
<dbReference type="InterPro" id="IPR036291">
    <property type="entry name" value="NAD(P)-bd_dom_sf"/>
</dbReference>
<dbReference type="NCBIfam" id="TIGR00465">
    <property type="entry name" value="ilvC"/>
    <property type="match status" value="1"/>
</dbReference>
<dbReference type="NCBIfam" id="NF004017">
    <property type="entry name" value="PRK05479.1"/>
    <property type="match status" value="1"/>
</dbReference>
<dbReference type="NCBIfam" id="NF009940">
    <property type="entry name" value="PRK13403.1"/>
    <property type="match status" value="1"/>
</dbReference>
<dbReference type="PANTHER" id="PTHR21371">
    <property type="entry name" value="KETOL-ACID REDUCTOISOMERASE, MITOCHONDRIAL"/>
    <property type="match status" value="1"/>
</dbReference>
<dbReference type="PANTHER" id="PTHR21371:SF1">
    <property type="entry name" value="KETOL-ACID REDUCTOISOMERASE, MITOCHONDRIAL"/>
    <property type="match status" value="1"/>
</dbReference>
<dbReference type="Pfam" id="PF01450">
    <property type="entry name" value="KARI_C"/>
    <property type="match status" value="1"/>
</dbReference>
<dbReference type="Pfam" id="PF07991">
    <property type="entry name" value="KARI_N"/>
    <property type="match status" value="1"/>
</dbReference>
<dbReference type="PIRSF" id="PIRSF000116">
    <property type="entry name" value="IlvC_gammaproteo"/>
    <property type="match status" value="1"/>
</dbReference>
<dbReference type="SUPFAM" id="SSF48179">
    <property type="entry name" value="6-phosphogluconate dehydrogenase C-terminal domain-like"/>
    <property type="match status" value="1"/>
</dbReference>
<dbReference type="SUPFAM" id="SSF51735">
    <property type="entry name" value="NAD(P)-binding Rossmann-fold domains"/>
    <property type="match status" value="1"/>
</dbReference>
<dbReference type="PROSITE" id="PS51851">
    <property type="entry name" value="KARI_C"/>
    <property type="match status" value="1"/>
</dbReference>
<dbReference type="PROSITE" id="PS51850">
    <property type="entry name" value="KARI_N"/>
    <property type="match status" value="1"/>
</dbReference>
<evidence type="ECO:0000255" key="1">
    <source>
        <dbReference type="HAMAP-Rule" id="MF_00435"/>
    </source>
</evidence>
<evidence type="ECO:0000255" key="2">
    <source>
        <dbReference type="PROSITE-ProRule" id="PRU01197"/>
    </source>
</evidence>
<evidence type="ECO:0000255" key="3">
    <source>
        <dbReference type="PROSITE-ProRule" id="PRU01198"/>
    </source>
</evidence>
<organism>
    <name type="scientific">Methylobacterium nodulans (strain LMG 21967 / CNCM I-2342 / ORS 2060)</name>
    <dbReference type="NCBI Taxonomy" id="460265"/>
    <lineage>
        <taxon>Bacteria</taxon>
        <taxon>Pseudomonadati</taxon>
        <taxon>Pseudomonadota</taxon>
        <taxon>Alphaproteobacteria</taxon>
        <taxon>Hyphomicrobiales</taxon>
        <taxon>Methylobacteriaceae</taxon>
        <taxon>Methylobacterium</taxon>
    </lineage>
</organism>
<reference key="1">
    <citation type="submission" date="2009-01" db="EMBL/GenBank/DDBJ databases">
        <title>Complete sequence of chromosome of Methylobacterium nodulans ORS 2060.</title>
        <authorList>
            <consortium name="US DOE Joint Genome Institute"/>
            <person name="Lucas S."/>
            <person name="Copeland A."/>
            <person name="Lapidus A."/>
            <person name="Glavina del Rio T."/>
            <person name="Dalin E."/>
            <person name="Tice H."/>
            <person name="Bruce D."/>
            <person name="Goodwin L."/>
            <person name="Pitluck S."/>
            <person name="Sims D."/>
            <person name="Brettin T."/>
            <person name="Detter J.C."/>
            <person name="Han C."/>
            <person name="Larimer F."/>
            <person name="Land M."/>
            <person name="Hauser L."/>
            <person name="Kyrpides N."/>
            <person name="Ivanova N."/>
            <person name="Marx C.J."/>
            <person name="Richardson P."/>
        </authorList>
    </citation>
    <scope>NUCLEOTIDE SEQUENCE [LARGE SCALE GENOMIC DNA]</scope>
    <source>
        <strain>LMG 21967 / CNCM I-2342 / ORS 2060</strain>
    </source>
</reference>
<proteinExistence type="inferred from homology"/>
<keyword id="KW-0028">Amino-acid biosynthesis</keyword>
<keyword id="KW-0100">Branched-chain amino acid biosynthesis</keyword>
<keyword id="KW-0460">Magnesium</keyword>
<keyword id="KW-0479">Metal-binding</keyword>
<keyword id="KW-0521">NADP</keyword>
<keyword id="KW-0560">Oxidoreductase</keyword>
<keyword id="KW-1185">Reference proteome</keyword>
<gene>
    <name evidence="1" type="primary">ilvC</name>
    <name type="ordered locus">Mnod_2857</name>
</gene>
<protein>
    <recommendedName>
        <fullName evidence="1">Ketol-acid reductoisomerase (NADP(+))</fullName>
        <shortName evidence="1">KARI</shortName>
        <ecNumber evidence="1">1.1.1.86</ecNumber>
    </recommendedName>
    <alternativeName>
        <fullName evidence="1">Acetohydroxy-acid isomeroreductase</fullName>
        <shortName evidence="1">AHIR</shortName>
    </alternativeName>
    <alternativeName>
        <fullName evidence="1">Alpha-keto-beta-hydroxylacyl reductoisomerase</fullName>
    </alternativeName>
    <alternativeName>
        <fullName evidence="1">Ketol-acid reductoisomerase type 1</fullName>
    </alternativeName>
    <alternativeName>
        <fullName evidence="1">Ketol-acid reductoisomerase type I</fullName>
    </alternativeName>
</protein>
<name>ILVC_METNO</name>
<sequence length="339" mass="37059">MRVYYDRDADINLIKGKKVVIVGYGSQGHAHALNLRDSGVKDIVIALRKGSASAKKAEAEGFKVMEVADAAAQADVVMMLTPDELQGDIYRESLHNQMKQGAALLFAHGLNVHFNLIEPRKDLDVLMVAPKGPGHTVRSEYLRGGGVPTLIAIAQDASGNAHDLGLSYASANGGGRAGIIETTFKEECETDLFGEQVVLCGGLVELIKAGFETLVEAGYAPEMAYFECLHEVKLIVDLIYEGGIANMNYSISNTAEYGEYVTGPRIITPETKAEMKRVLTDIQSGTFTRNWMLENKVNQTSFKATRARNAAHPIEEVGERLRAMMPWIKEKALVDKTKN</sequence>
<comment type="function">
    <text evidence="1">Involved in the biosynthesis of branched-chain amino acids (BCAA). Catalyzes an alkyl-migration followed by a ketol-acid reduction of (S)-2-acetolactate (S2AL) to yield (R)-2,3-dihydroxy-isovalerate. In the isomerase reaction, S2AL is rearranged via a Mg-dependent methyl migration to produce 3-hydroxy-3-methyl-2-ketobutyrate (HMKB). In the reductase reaction, this 2-ketoacid undergoes a metal-dependent reduction by NADPH to yield (R)-2,3-dihydroxy-isovalerate.</text>
</comment>
<comment type="catalytic activity">
    <reaction evidence="1">
        <text>(2R)-2,3-dihydroxy-3-methylbutanoate + NADP(+) = (2S)-2-acetolactate + NADPH + H(+)</text>
        <dbReference type="Rhea" id="RHEA:22068"/>
        <dbReference type="ChEBI" id="CHEBI:15378"/>
        <dbReference type="ChEBI" id="CHEBI:49072"/>
        <dbReference type="ChEBI" id="CHEBI:57783"/>
        <dbReference type="ChEBI" id="CHEBI:58349"/>
        <dbReference type="ChEBI" id="CHEBI:58476"/>
        <dbReference type="EC" id="1.1.1.86"/>
    </reaction>
</comment>
<comment type="catalytic activity">
    <reaction evidence="1">
        <text>(2R,3R)-2,3-dihydroxy-3-methylpentanoate + NADP(+) = (S)-2-ethyl-2-hydroxy-3-oxobutanoate + NADPH + H(+)</text>
        <dbReference type="Rhea" id="RHEA:13493"/>
        <dbReference type="ChEBI" id="CHEBI:15378"/>
        <dbReference type="ChEBI" id="CHEBI:49256"/>
        <dbReference type="ChEBI" id="CHEBI:49258"/>
        <dbReference type="ChEBI" id="CHEBI:57783"/>
        <dbReference type="ChEBI" id="CHEBI:58349"/>
        <dbReference type="EC" id="1.1.1.86"/>
    </reaction>
</comment>
<comment type="cofactor">
    <cofactor evidence="1">
        <name>Mg(2+)</name>
        <dbReference type="ChEBI" id="CHEBI:18420"/>
    </cofactor>
    <text evidence="1">Binds 2 magnesium ions per subunit.</text>
</comment>
<comment type="pathway">
    <text evidence="1">Amino-acid biosynthesis; L-isoleucine biosynthesis; L-isoleucine from 2-oxobutanoate: step 2/4.</text>
</comment>
<comment type="pathway">
    <text evidence="1">Amino-acid biosynthesis; L-valine biosynthesis; L-valine from pyruvate: step 2/4.</text>
</comment>
<comment type="similarity">
    <text evidence="1">Belongs to the ketol-acid reductoisomerase family.</text>
</comment>
<feature type="chain" id="PRO_1000190977" description="Ketol-acid reductoisomerase (NADP(+))">
    <location>
        <begin position="1"/>
        <end position="339"/>
    </location>
</feature>
<feature type="domain" description="KARI N-terminal Rossmann" evidence="2">
    <location>
        <begin position="1"/>
        <end position="182"/>
    </location>
</feature>
<feature type="domain" description="KARI C-terminal knotted" evidence="3">
    <location>
        <begin position="183"/>
        <end position="328"/>
    </location>
</feature>
<feature type="active site" evidence="1">
    <location>
        <position position="108"/>
    </location>
</feature>
<feature type="binding site" evidence="1">
    <location>
        <begin position="24"/>
        <end position="27"/>
    </location>
    <ligand>
        <name>NADP(+)</name>
        <dbReference type="ChEBI" id="CHEBI:58349"/>
    </ligand>
</feature>
<feature type="binding site" evidence="1">
    <location>
        <position position="48"/>
    </location>
    <ligand>
        <name>NADP(+)</name>
        <dbReference type="ChEBI" id="CHEBI:58349"/>
    </ligand>
</feature>
<feature type="binding site" evidence="1">
    <location>
        <position position="51"/>
    </location>
    <ligand>
        <name>NADP(+)</name>
        <dbReference type="ChEBI" id="CHEBI:58349"/>
    </ligand>
</feature>
<feature type="binding site" evidence="1">
    <location>
        <position position="53"/>
    </location>
    <ligand>
        <name>NADP(+)</name>
        <dbReference type="ChEBI" id="CHEBI:58349"/>
    </ligand>
</feature>
<feature type="binding site" evidence="1">
    <location>
        <begin position="83"/>
        <end position="86"/>
    </location>
    <ligand>
        <name>NADP(+)</name>
        <dbReference type="ChEBI" id="CHEBI:58349"/>
    </ligand>
</feature>
<feature type="binding site" evidence="1">
    <location>
        <position position="134"/>
    </location>
    <ligand>
        <name>NADP(+)</name>
        <dbReference type="ChEBI" id="CHEBI:58349"/>
    </ligand>
</feature>
<feature type="binding site" evidence="1">
    <location>
        <position position="191"/>
    </location>
    <ligand>
        <name>Mg(2+)</name>
        <dbReference type="ChEBI" id="CHEBI:18420"/>
        <label>1</label>
    </ligand>
</feature>
<feature type="binding site" evidence="1">
    <location>
        <position position="191"/>
    </location>
    <ligand>
        <name>Mg(2+)</name>
        <dbReference type="ChEBI" id="CHEBI:18420"/>
        <label>2</label>
    </ligand>
</feature>
<feature type="binding site" evidence="1">
    <location>
        <position position="195"/>
    </location>
    <ligand>
        <name>Mg(2+)</name>
        <dbReference type="ChEBI" id="CHEBI:18420"/>
        <label>1</label>
    </ligand>
</feature>
<feature type="binding site" evidence="1">
    <location>
        <position position="227"/>
    </location>
    <ligand>
        <name>Mg(2+)</name>
        <dbReference type="ChEBI" id="CHEBI:18420"/>
        <label>2</label>
    </ligand>
</feature>
<feature type="binding site" evidence="1">
    <location>
        <position position="231"/>
    </location>
    <ligand>
        <name>Mg(2+)</name>
        <dbReference type="ChEBI" id="CHEBI:18420"/>
        <label>2</label>
    </ligand>
</feature>
<feature type="binding site" evidence="1">
    <location>
        <position position="252"/>
    </location>
    <ligand>
        <name>substrate</name>
    </ligand>
</feature>